<dbReference type="EMBL" id="AB168611">
    <property type="protein sequence ID" value="BAE00724.1"/>
    <property type="molecule type" value="mRNA"/>
</dbReference>
<dbReference type="RefSeq" id="NP_001270159.1">
    <property type="nucleotide sequence ID" value="NM_001283230.1"/>
</dbReference>
<dbReference type="RefSeq" id="XP_005551947.1">
    <property type="nucleotide sequence ID" value="XM_005551890.4"/>
</dbReference>
<dbReference type="RefSeq" id="XP_045247441.1">
    <property type="nucleotide sequence ID" value="XM_045391506.2"/>
</dbReference>
<dbReference type="RefSeq" id="XP_045247442.1">
    <property type="nucleotide sequence ID" value="XM_045391507.2"/>
</dbReference>
<dbReference type="SMR" id="Q4R848"/>
<dbReference type="STRING" id="9541.ENSMFAP00000042797"/>
<dbReference type="Ensembl" id="ENSMFAT00000017081.2">
    <property type="protein sequence ID" value="ENSMFAP00000042797.1"/>
    <property type="gene ID" value="ENSMFAG00000040137.2"/>
</dbReference>
<dbReference type="GeneID" id="101925911"/>
<dbReference type="CTD" id="9519"/>
<dbReference type="VEuPathDB" id="HostDB:ENSMFAG00000040137"/>
<dbReference type="eggNOG" id="KOG3302">
    <property type="taxonomic scope" value="Eukaryota"/>
</dbReference>
<dbReference type="GeneTree" id="ENSGT00940000155712"/>
<dbReference type="OMA" id="NCEYEPE"/>
<dbReference type="Proteomes" id="UP000233100">
    <property type="component" value="Chromosome 4"/>
</dbReference>
<dbReference type="Bgee" id="ENSMFAG00000040137">
    <property type="expression patterns" value="Expressed in lung and 13 other cell types or tissues"/>
</dbReference>
<dbReference type="GO" id="GO:0005737">
    <property type="term" value="C:cytoplasm"/>
    <property type="evidence" value="ECO:0007669"/>
    <property type="project" value="UniProtKB-SubCell"/>
</dbReference>
<dbReference type="GO" id="GO:0001673">
    <property type="term" value="C:male germ cell nucleus"/>
    <property type="evidence" value="ECO:0007669"/>
    <property type="project" value="Ensembl"/>
</dbReference>
<dbReference type="GO" id="GO:0005672">
    <property type="term" value="C:transcription factor TFIIA complex"/>
    <property type="evidence" value="ECO:0007669"/>
    <property type="project" value="Ensembl"/>
</dbReference>
<dbReference type="GO" id="GO:0000979">
    <property type="term" value="F:RNA polymerase II core promoter sequence-specific DNA binding"/>
    <property type="evidence" value="ECO:0007669"/>
    <property type="project" value="Ensembl"/>
</dbReference>
<dbReference type="GO" id="GO:0016251">
    <property type="term" value="F:RNA polymerase II general transcription initiation factor activity"/>
    <property type="evidence" value="ECO:0007669"/>
    <property type="project" value="Ensembl"/>
</dbReference>
<dbReference type="GO" id="GO:0001675">
    <property type="term" value="P:acrosome assembly"/>
    <property type="evidence" value="ECO:0007669"/>
    <property type="project" value="Ensembl"/>
</dbReference>
<dbReference type="GO" id="GO:0006352">
    <property type="term" value="P:DNA-templated transcription initiation"/>
    <property type="evidence" value="ECO:0007669"/>
    <property type="project" value="InterPro"/>
</dbReference>
<dbReference type="GO" id="GO:0006235">
    <property type="term" value="P:dTTP biosynthetic process"/>
    <property type="evidence" value="ECO:0007669"/>
    <property type="project" value="Ensembl"/>
</dbReference>
<dbReference type="GO" id="GO:0007289">
    <property type="term" value="P:spermatid nucleus differentiation"/>
    <property type="evidence" value="ECO:0007669"/>
    <property type="project" value="Ensembl"/>
</dbReference>
<dbReference type="CDD" id="cd04517">
    <property type="entry name" value="TLF"/>
    <property type="match status" value="1"/>
</dbReference>
<dbReference type="FunFam" id="3.30.310.10:FF:000005">
    <property type="entry name" value="TATA box-binding protein-like 1"/>
    <property type="match status" value="1"/>
</dbReference>
<dbReference type="FunFam" id="3.30.310.10:FF:000009">
    <property type="entry name" value="TatA box-binding protein-like protein 1"/>
    <property type="match status" value="1"/>
</dbReference>
<dbReference type="Gene3D" id="3.30.310.10">
    <property type="entry name" value="TATA-Binding Protein"/>
    <property type="match status" value="2"/>
</dbReference>
<dbReference type="InterPro" id="IPR000814">
    <property type="entry name" value="TBP"/>
</dbReference>
<dbReference type="InterPro" id="IPR015445">
    <property type="entry name" value="TBP-like"/>
</dbReference>
<dbReference type="InterPro" id="IPR012295">
    <property type="entry name" value="TBP_dom_sf"/>
</dbReference>
<dbReference type="PANTHER" id="PTHR10126">
    <property type="entry name" value="TATA-BOX BINDING PROTEIN"/>
    <property type="match status" value="1"/>
</dbReference>
<dbReference type="Pfam" id="PF00352">
    <property type="entry name" value="TBP"/>
    <property type="match status" value="2"/>
</dbReference>
<dbReference type="PRINTS" id="PR00686">
    <property type="entry name" value="TIFACTORIID"/>
</dbReference>
<dbReference type="SUPFAM" id="SSF55945">
    <property type="entry name" value="TATA-box binding protein-like"/>
    <property type="match status" value="2"/>
</dbReference>
<keyword id="KW-0963">Cytoplasm</keyword>
<keyword id="KW-0238">DNA-binding</keyword>
<keyword id="KW-0539">Nucleus</keyword>
<keyword id="KW-1185">Reference proteome</keyword>
<keyword id="KW-0804">Transcription</keyword>
<keyword id="KW-0805">Transcription regulation</keyword>
<evidence type="ECO:0000250" key="1"/>
<evidence type="ECO:0000305" key="2"/>
<accession>Q4R848</accession>
<organism>
    <name type="scientific">Macaca fascicularis</name>
    <name type="common">Crab-eating macaque</name>
    <name type="synonym">Cynomolgus monkey</name>
    <dbReference type="NCBI Taxonomy" id="9541"/>
    <lineage>
        <taxon>Eukaryota</taxon>
        <taxon>Metazoa</taxon>
        <taxon>Chordata</taxon>
        <taxon>Craniata</taxon>
        <taxon>Vertebrata</taxon>
        <taxon>Euteleostomi</taxon>
        <taxon>Mammalia</taxon>
        <taxon>Eutheria</taxon>
        <taxon>Euarchontoglires</taxon>
        <taxon>Primates</taxon>
        <taxon>Haplorrhini</taxon>
        <taxon>Catarrhini</taxon>
        <taxon>Cercopithecidae</taxon>
        <taxon>Cercopithecinae</taxon>
        <taxon>Macaca</taxon>
    </lineage>
</organism>
<sequence length="186" mass="20887">MDADSDVALDILITNVVCVFRTRCHLNLRKIALEGANVIYKRDVGKVLMKLRKPRITATIWSSGKIICTGATSEEEAKFGARRLARSLQKLGFQVIFTDFKVVNVLAVCNMPFEIRLPEFTKNNRPHASYEPELHPAVCYRIKSLRATLQIFSTGSITVTGPNVKAVATAVEQIYPFVFESRKEIL</sequence>
<feature type="chain" id="PRO_0000268202" description="TATA box-binding protein-like 1">
    <location>
        <begin position="1"/>
        <end position="186"/>
    </location>
</feature>
<name>TBPL1_MACFA</name>
<proteinExistence type="evidence at transcript level"/>
<comment type="function">
    <text evidence="1">Part of a specialized transcription system that mediates the transcription of most ribosomal proteins through the 5'-TCT-3' motif which is a core promoter element at these genes. Seems to also mediate the transcription of NF1. Does not bind the TATA box (By similarity).</text>
</comment>
<comment type="subunit">
    <text evidence="1">Binds TFIIA and TFIIB.</text>
</comment>
<comment type="subcellular location">
    <subcellularLocation>
        <location evidence="1">Cytoplasm</location>
    </subcellularLocation>
    <subcellularLocation>
        <location evidence="1">Nucleus</location>
    </subcellularLocation>
</comment>
<comment type="similarity">
    <text evidence="2">Belongs to the TBP family.</text>
</comment>
<reference key="1">
    <citation type="submission" date="2005-06" db="EMBL/GenBank/DDBJ databases">
        <title>DNA sequences of macaque genes expressed in brain or testis and its evolutionary implications.</title>
        <authorList>
            <consortium name="International consortium for macaque cDNA sequencing and analysis"/>
        </authorList>
    </citation>
    <scope>NUCLEOTIDE SEQUENCE [LARGE SCALE MRNA]</scope>
    <source>
        <tissue>Testis</tissue>
    </source>
</reference>
<gene>
    <name type="primary">TBPL1</name>
    <name type="synonym">TLF</name>
    <name type="synonym">TLP</name>
    <name type="synonym">TRF2</name>
    <name type="synonym">TRP</name>
    <name type="ORF">QtsA-13476</name>
</gene>
<protein>
    <recommendedName>
        <fullName>TATA box-binding protein-like 1</fullName>
        <shortName>TBP-like 1</shortName>
    </recommendedName>
    <alternativeName>
        <fullName>TATA box-binding protein-related factor 2</fullName>
        <shortName>TBP-related factor 2</shortName>
    </alternativeName>
    <alternativeName>
        <fullName>TBP-like factor</fullName>
    </alternativeName>
    <alternativeName>
        <fullName>TBP-related protein</fullName>
    </alternativeName>
</protein>